<keyword id="KW-0227">DNA damage</keyword>
<keyword id="KW-0234">DNA repair</keyword>
<keyword id="KW-0235">DNA replication</keyword>
<keyword id="KW-0436">Ligase</keyword>
<keyword id="KW-0460">Magnesium</keyword>
<keyword id="KW-0464">Manganese</keyword>
<keyword id="KW-0479">Metal-binding</keyword>
<keyword id="KW-0520">NAD</keyword>
<keyword id="KW-0862">Zinc</keyword>
<gene>
    <name evidence="1" type="primary">ligA</name>
    <name type="ordered locus">Rsph17025_1159</name>
</gene>
<dbReference type="EC" id="6.5.1.2" evidence="1"/>
<dbReference type="EMBL" id="CP000661">
    <property type="protein sequence ID" value="ABP70060.1"/>
    <property type="molecule type" value="Genomic_DNA"/>
</dbReference>
<dbReference type="SMR" id="A4WRP6"/>
<dbReference type="STRING" id="349102.Rsph17025_1159"/>
<dbReference type="KEGG" id="rsq:Rsph17025_1159"/>
<dbReference type="eggNOG" id="COG0272">
    <property type="taxonomic scope" value="Bacteria"/>
</dbReference>
<dbReference type="HOGENOM" id="CLU_007764_2_0_5"/>
<dbReference type="BioCyc" id="RSPH349102:G1G8M-1187-MONOMER"/>
<dbReference type="GO" id="GO:0005829">
    <property type="term" value="C:cytosol"/>
    <property type="evidence" value="ECO:0007669"/>
    <property type="project" value="TreeGrafter"/>
</dbReference>
<dbReference type="GO" id="GO:0003911">
    <property type="term" value="F:DNA ligase (NAD+) activity"/>
    <property type="evidence" value="ECO:0007669"/>
    <property type="project" value="UniProtKB-UniRule"/>
</dbReference>
<dbReference type="GO" id="GO:0046872">
    <property type="term" value="F:metal ion binding"/>
    <property type="evidence" value="ECO:0007669"/>
    <property type="project" value="UniProtKB-KW"/>
</dbReference>
<dbReference type="GO" id="GO:0006281">
    <property type="term" value="P:DNA repair"/>
    <property type="evidence" value="ECO:0007669"/>
    <property type="project" value="UniProtKB-KW"/>
</dbReference>
<dbReference type="GO" id="GO:0006260">
    <property type="term" value="P:DNA replication"/>
    <property type="evidence" value="ECO:0007669"/>
    <property type="project" value="UniProtKB-KW"/>
</dbReference>
<dbReference type="CDD" id="cd17748">
    <property type="entry name" value="BRCT_DNA_ligase_like"/>
    <property type="match status" value="1"/>
</dbReference>
<dbReference type="CDD" id="cd00114">
    <property type="entry name" value="LIGANc"/>
    <property type="match status" value="1"/>
</dbReference>
<dbReference type="FunFam" id="1.10.150.20:FF:000007">
    <property type="entry name" value="DNA ligase"/>
    <property type="match status" value="1"/>
</dbReference>
<dbReference type="FunFam" id="3.30.470.30:FF:000001">
    <property type="entry name" value="DNA ligase"/>
    <property type="match status" value="1"/>
</dbReference>
<dbReference type="Gene3D" id="6.20.10.30">
    <property type="match status" value="1"/>
</dbReference>
<dbReference type="Gene3D" id="1.10.150.20">
    <property type="entry name" value="5' to 3' exonuclease, C-terminal subdomain"/>
    <property type="match status" value="2"/>
</dbReference>
<dbReference type="Gene3D" id="3.40.50.10190">
    <property type="entry name" value="BRCT domain"/>
    <property type="match status" value="1"/>
</dbReference>
<dbReference type="Gene3D" id="3.30.470.30">
    <property type="entry name" value="DNA ligase/mRNA capping enzyme"/>
    <property type="match status" value="1"/>
</dbReference>
<dbReference type="Gene3D" id="1.10.287.610">
    <property type="entry name" value="Helix hairpin bin"/>
    <property type="match status" value="1"/>
</dbReference>
<dbReference type="Gene3D" id="2.40.50.140">
    <property type="entry name" value="Nucleic acid-binding proteins"/>
    <property type="match status" value="1"/>
</dbReference>
<dbReference type="HAMAP" id="MF_01588">
    <property type="entry name" value="DNA_ligase_A"/>
    <property type="match status" value="1"/>
</dbReference>
<dbReference type="InterPro" id="IPR001357">
    <property type="entry name" value="BRCT_dom"/>
</dbReference>
<dbReference type="InterPro" id="IPR036420">
    <property type="entry name" value="BRCT_dom_sf"/>
</dbReference>
<dbReference type="InterPro" id="IPR041663">
    <property type="entry name" value="DisA/LigA_HHH"/>
</dbReference>
<dbReference type="InterPro" id="IPR001679">
    <property type="entry name" value="DNA_ligase"/>
</dbReference>
<dbReference type="InterPro" id="IPR018239">
    <property type="entry name" value="DNA_ligase_AS"/>
</dbReference>
<dbReference type="InterPro" id="IPR033136">
    <property type="entry name" value="DNA_ligase_CS"/>
</dbReference>
<dbReference type="InterPro" id="IPR013839">
    <property type="entry name" value="DNAligase_adenylation"/>
</dbReference>
<dbReference type="InterPro" id="IPR013840">
    <property type="entry name" value="DNAligase_N"/>
</dbReference>
<dbReference type="InterPro" id="IPR012340">
    <property type="entry name" value="NA-bd_OB-fold"/>
</dbReference>
<dbReference type="InterPro" id="IPR004150">
    <property type="entry name" value="NAD_DNA_ligase_OB"/>
</dbReference>
<dbReference type="InterPro" id="IPR010994">
    <property type="entry name" value="RuvA_2-like"/>
</dbReference>
<dbReference type="InterPro" id="IPR004149">
    <property type="entry name" value="Znf_DNAligase_C4"/>
</dbReference>
<dbReference type="NCBIfam" id="TIGR00575">
    <property type="entry name" value="dnlj"/>
    <property type="match status" value="1"/>
</dbReference>
<dbReference type="NCBIfam" id="NF005932">
    <property type="entry name" value="PRK07956.1"/>
    <property type="match status" value="1"/>
</dbReference>
<dbReference type="PANTHER" id="PTHR23389">
    <property type="entry name" value="CHROMOSOME TRANSMISSION FIDELITY FACTOR 18"/>
    <property type="match status" value="1"/>
</dbReference>
<dbReference type="PANTHER" id="PTHR23389:SF9">
    <property type="entry name" value="DNA LIGASE"/>
    <property type="match status" value="1"/>
</dbReference>
<dbReference type="Pfam" id="PF00533">
    <property type="entry name" value="BRCT"/>
    <property type="match status" value="1"/>
</dbReference>
<dbReference type="Pfam" id="PF01653">
    <property type="entry name" value="DNA_ligase_aden"/>
    <property type="match status" value="1"/>
</dbReference>
<dbReference type="Pfam" id="PF03120">
    <property type="entry name" value="DNA_ligase_OB"/>
    <property type="match status" value="1"/>
</dbReference>
<dbReference type="Pfam" id="PF03119">
    <property type="entry name" value="DNA_ligase_ZBD"/>
    <property type="match status" value="1"/>
</dbReference>
<dbReference type="Pfam" id="PF12826">
    <property type="entry name" value="HHH_2"/>
    <property type="match status" value="1"/>
</dbReference>
<dbReference type="PIRSF" id="PIRSF001604">
    <property type="entry name" value="LigA"/>
    <property type="match status" value="1"/>
</dbReference>
<dbReference type="SMART" id="SM00292">
    <property type="entry name" value="BRCT"/>
    <property type="match status" value="1"/>
</dbReference>
<dbReference type="SMART" id="SM00532">
    <property type="entry name" value="LIGANc"/>
    <property type="match status" value="1"/>
</dbReference>
<dbReference type="SUPFAM" id="SSF52113">
    <property type="entry name" value="BRCT domain"/>
    <property type="match status" value="1"/>
</dbReference>
<dbReference type="SUPFAM" id="SSF56091">
    <property type="entry name" value="DNA ligase/mRNA capping enzyme, catalytic domain"/>
    <property type="match status" value="1"/>
</dbReference>
<dbReference type="SUPFAM" id="SSF50249">
    <property type="entry name" value="Nucleic acid-binding proteins"/>
    <property type="match status" value="1"/>
</dbReference>
<dbReference type="SUPFAM" id="SSF47781">
    <property type="entry name" value="RuvA domain 2-like"/>
    <property type="match status" value="1"/>
</dbReference>
<dbReference type="PROSITE" id="PS50172">
    <property type="entry name" value="BRCT"/>
    <property type="match status" value="1"/>
</dbReference>
<dbReference type="PROSITE" id="PS01055">
    <property type="entry name" value="DNA_LIGASE_N1"/>
    <property type="match status" value="1"/>
</dbReference>
<dbReference type="PROSITE" id="PS01056">
    <property type="entry name" value="DNA_LIGASE_N2"/>
    <property type="match status" value="1"/>
</dbReference>
<organism>
    <name type="scientific">Cereibacter sphaeroides (strain ATCC 17025 / ATH 2.4.3)</name>
    <name type="common">Rhodobacter sphaeroides</name>
    <dbReference type="NCBI Taxonomy" id="349102"/>
    <lineage>
        <taxon>Bacteria</taxon>
        <taxon>Pseudomonadati</taxon>
        <taxon>Pseudomonadota</taxon>
        <taxon>Alphaproteobacteria</taxon>
        <taxon>Rhodobacterales</taxon>
        <taxon>Paracoccaceae</taxon>
        <taxon>Cereibacter</taxon>
    </lineage>
</organism>
<name>DNLJ_CERS5</name>
<reference key="1">
    <citation type="submission" date="2007-04" db="EMBL/GenBank/DDBJ databases">
        <title>Complete sequence of chromosome of Rhodobacter sphaeroides ATCC 17025.</title>
        <authorList>
            <consortium name="US DOE Joint Genome Institute"/>
            <person name="Copeland A."/>
            <person name="Lucas S."/>
            <person name="Lapidus A."/>
            <person name="Barry K."/>
            <person name="Detter J.C."/>
            <person name="Glavina del Rio T."/>
            <person name="Hammon N."/>
            <person name="Israni S."/>
            <person name="Dalin E."/>
            <person name="Tice H."/>
            <person name="Pitluck S."/>
            <person name="Chertkov O."/>
            <person name="Brettin T."/>
            <person name="Bruce D."/>
            <person name="Han C."/>
            <person name="Schmutz J."/>
            <person name="Larimer F."/>
            <person name="Land M."/>
            <person name="Hauser L."/>
            <person name="Kyrpides N."/>
            <person name="Kim E."/>
            <person name="Richardson P."/>
            <person name="Mackenzie C."/>
            <person name="Choudhary M."/>
            <person name="Donohue T.J."/>
            <person name="Kaplan S."/>
        </authorList>
    </citation>
    <scope>NUCLEOTIDE SEQUENCE [LARGE SCALE GENOMIC DNA]</scope>
    <source>
        <strain>ATCC 17025 / ATH 2.4.3</strain>
    </source>
</reference>
<accession>A4WRP6</accession>
<comment type="function">
    <text evidence="1">DNA ligase that catalyzes the formation of phosphodiester linkages between 5'-phosphoryl and 3'-hydroxyl groups in double-stranded DNA using NAD as a coenzyme and as the energy source for the reaction. It is essential for DNA replication and repair of damaged DNA.</text>
</comment>
<comment type="catalytic activity">
    <reaction evidence="1">
        <text>NAD(+) + (deoxyribonucleotide)n-3'-hydroxyl + 5'-phospho-(deoxyribonucleotide)m = (deoxyribonucleotide)n+m + AMP + beta-nicotinamide D-nucleotide.</text>
        <dbReference type="EC" id="6.5.1.2"/>
    </reaction>
</comment>
<comment type="cofactor">
    <cofactor evidence="1">
        <name>Mg(2+)</name>
        <dbReference type="ChEBI" id="CHEBI:18420"/>
    </cofactor>
    <cofactor evidence="1">
        <name>Mn(2+)</name>
        <dbReference type="ChEBI" id="CHEBI:29035"/>
    </cofactor>
</comment>
<comment type="similarity">
    <text evidence="1">Belongs to the NAD-dependent DNA ligase family. LigA subfamily.</text>
</comment>
<protein>
    <recommendedName>
        <fullName evidence="1">DNA ligase</fullName>
        <ecNumber evidence="1">6.5.1.2</ecNumber>
    </recommendedName>
    <alternativeName>
        <fullName evidence="1">Polydeoxyribonucleotide synthase [NAD(+)]</fullName>
    </alternativeName>
</protein>
<evidence type="ECO:0000255" key="1">
    <source>
        <dbReference type="HAMAP-Rule" id="MF_01588"/>
    </source>
</evidence>
<proteinExistence type="inferred from homology"/>
<feature type="chain" id="PRO_0000313395" description="DNA ligase">
    <location>
        <begin position="1"/>
        <end position="704"/>
    </location>
</feature>
<feature type="domain" description="BRCT" evidence="1">
    <location>
        <begin position="625"/>
        <end position="704"/>
    </location>
</feature>
<feature type="active site" description="N6-AMP-lysine intermediate" evidence="1">
    <location>
        <position position="126"/>
    </location>
</feature>
<feature type="binding site" evidence="1">
    <location>
        <begin position="43"/>
        <end position="47"/>
    </location>
    <ligand>
        <name>NAD(+)</name>
        <dbReference type="ChEBI" id="CHEBI:57540"/>
    </ligand>
</feature>
<feature type="binding site" evidence="1">
    <location>
        <begin position="92"/>
        <end position="93"/>
    </location>
    <ligand>
        <name>NAD(+)</name>
        <dbReference type="ChEBI" id="CHEBI:57540"/>
    </ligand>
</feature>
<feature type="binding site" evidence="1">
    <location>
        <position position="124"/>
    </location>
    <ligand>
        <name>NAD(+)</name>
        <dbReference type="ChEBI" id="CHEBI:57540"/>
    </ligand>
</feature>
<feature type="binding site" evidence="1">
    <location>
        <position position="147"/>
    </location>
    <ligand>
        <name>NAD(+)</name>
        <dbReference type="ChEBI" id="CHEBI:57540"/>
    </ligand>
</feature>
<feature type="binding site" evidence="1">
    <location>
        <position position="182"/>
    </location>
    <ligand>
        <name>NAD(+)</name>
        <dbReference type="ChEBI" id="CHEBI:57540"/>
    </ligand>
</feature>
<feature type="binding site" evidence="1">
    <location>
        <position position="298"/>
    </location>
    <ligand>
        <name>NAD(+)</name>
        <dbReference type="ChEBI" id="CHEBI:57540"/>
    </ligand>
</feature>
<feature type="binding site" evidence="1">
    <location>
        <position position="322"/>
    </location>
    <ligand>
        <name>NAD(+)</name>
        <dbReference type="ChEBI" id="CHEBI:57540"/>
    </ligand>
</feature>
<feature type="binding site" evidence="1">
    <location>
        <position position="427"/>
    </location>
    <ligand>
        <name>Zn(2+)</name>
        <dbReference type="ChEBI" id="CHEBI:29105"/>
    </ligand>
</feature>
<feature type="binding site" evidence="1">
    <location>
        <position position="430"/>
    </location>
    <ligand>
        <name>Zn(2+)</name>
        <dbReference type="ChEBI" id="CHEBI:29105"/>
    </ligand>
</feature>
<feature type="binding site" evidence="1">
    <location>
        <position position="445"/>
    </location>
    <ligand>
        <name>Zn(2+)</name>
        <dbReference type="ChEBI" id="CHEBI:29105"/>
    </ligand>
</feature>
<feature type="binding site" evidence="1">
    <location>
        <position position="451"/>
    </location>
    <ligand>
        <name>Zn(2+)</name>
        <dbReference type="ChEBI" id="CHEBI:29105"/>
    </ligand>
</feature>
<sequence>MQDERPVDQLTEAEAAAELAHLAEAIAAADTAYHTHDAPRISDADYDALKRRNRAIEERFPALRRSDSPSERVGGALAEGFAKVRHEVRMLSLENAFELAEVEEWIERIRRFLGHVGDLRFTAEPKIDGLSLSLRYEKGRLVQAATRGDGETGENVTENARTIGDLPTELTGAPDLLEVRGEVYMRHADFAALNERQEATGQRLFANPRNAAAGSLRQLDPAVTASRPLHFFAYAWGAHSEPLADTQQGAIARLSALGFATNPLTRLCTGPDELLAHYADIERQRASLGYDIDGVVYKVDDLALQRRLGFRASTPRWAIAHKFAAELAWTQLEGIDIQVGRTGALSPVARLKPVTVGGVVVANATLHNEDYIAGRDSKGQEIRGGKDIRVGDWVQVYRAGDVIPKVAEVDLSRRPEGAEPYRFPDTCPDCGSAAIREPGDSVRRCTGGLICPAQQVERLKHFVSRAAFDIEGLGARQVEALWRDGWIRQPADIFELPNRYRDGLQRLENREGWGRKSAENLLAAIEARRRIALHRLIFALGIRHVGETTATLLATHYGSWAAFEAAMTRAEVGTGSEWQDLLSIDGVGAVLATSLVTTFHQEAERAAIDALAAHLTVEDAEMRAPVESPIAGKIVVFTGTLEKMSRNEAKARAEALGAKVSGSVSARTDLVVAGPGAGSKAKQAAALGVETIGEDAWLRLIGDA</sequence>